<comment type="function">
    <text evidence="2">Catalyzes the calcium-dependent hydrolysis of the 2-acyl groups in 3-sn-phosphoglycerides.</text>
</comment>
<comment type="catalytic activity">
    <reaction evidence="2">
        <text>a 1,2-diacyl-sn-glycero-3-phosphocholine + H2O = a 1-acyl-sn-glycero-3-phosphocholine + a fatty acid + H(+)</text>
        <dbReference type="Rhea" id="RHEA:15801"/>
        <dbReference type="ChEBI" id="CHEBI:15377"/>
        <dbReference type="ChEBI" id="CHEBI:15378"/>
        <dbReference type="ChEBI" id="CHEBI:28868"/>
        <dbReference type="ChEBI" id="CHEBI:57643"/>
        <dbReference type="ChEBI" id="CHEBI:58168"/>
        <dbReference type="EC" id="3.1.1.4"/>
    </reaction>
</comment>
<comment type="cofactor">
    <cofactor evidence="2">
        <name>Ca(2+)</name>
        <dbReference type="ChEBI" id="CHEBI:29108"/>
    </cofactor>
</comment>
<comment type="subunit">
    <text evidence="2">Heterodimer of an alpha and a beta chain; probably disulfide-linked.</text>
</comment>
<comment type="subcellular location">
    <subcellularLocation>
        <location evidence="2">Secreted</location>
    </subcellularLocation>
</comment>
<comment type="tissue specificity">
    <text evidence="5">Expressed by the venom duct.</text>
</comment>
<comment type="mass spectrometry">
    <text>The measured mass is of a heterodimer of an alpha and a beta chain.</text>
</comment>
<comment type="mass spectrometry">
    <molecule>Conodipine-P1 alpha subunit</molecule>
</comment>
<comment type="mass spectrometry">
    <molecule>Conodipine-P1 beta subunit</molecule>
</comment>
<comment type="similarity">
    <text evidence="4">Belongs to the phospholipase A2 family. Group IX subfamily.</text>
</comment>
<sequence>MKLLAPVLWAMAALGVTWLVAVDSKESCTKHSNGCSTPLRLPCQEYFRPACDIHDNCYHCGTIFGISRKECDDAFLKDMNTLCKKLGSNSATCPARGKREVTSHRATSIAHSRLWKTALDQKSFLNRKARQAILLTPNSCLYWANNFYMAVHVFGARSYSRTTDPKDCQGLKHCLPNH</sequence>
<name>COP1_CONPU</name>
<feature type="signal peptide" evidence="2">
    <location>
        <begin position="1"/>
        <end position="24"/>
    </location>
</feature>
<feature type="chain" id="PRO_0000449351" description="Conodipine-P1 alpha subunit" evidence="3">
    <location>
        <begin position="25"/>
        <end position="97"/>
    </location>
</feature>
<feature type="propeptide" id="PRO_0000449352" description="Interchain peptide" evidence="3">
    <location>
        <begin position="98"/>
        <end position="130"/>
    </location>
</feature>
<feature type="chain" id="PRO_0000449353" description="Conodipine-P1 beta subunit" evidence="3">
    <location>
        <begin position="131"/>
        <end position="178"/>
    </location>
</feature>
<feature type="active site" evidence="1">
    <location>
        <position position="54"/>
    </location>
</feature>
<feature type="modified residue" description="4-hydroxyproline; partial" evidence="2">
    <location>
        <position position="38"/>
    </location>
</feature>
<feature type="modified residue" description="4-hydroxyproline; partial" evidence="2">
    <location>
        <position position="42"/>
    </location>
</feature>
<feature type="modified residue" description="4-hydroxyproline; partial" evidence="2">
    <location>
        <position position="49"/>
    </location>
</feature>
<feature type="modified residue" description="Pyrrolidone carboxylic acid" evidence="2">
    <location>
        <position position="131"/>
    </location>
</feature>
<feature type="modified residue" description="4-hydroxyproline; partial" evidence="2">
    <location>
        <position position="137"/>
    </location>
</feature>
<dbReference type="EC" id="3.1.1.4" evidence="2"/>
<dbReference type="EMBL" id="MK493027">
    <property type="protein sequence ID" value="QEO32922.1"/>
    <property type="molecule type" value="mRNA"/>
</dbReference>
<dbReference type="GO" id="GO:0005576">
    <property type="term" value="C:extracellular region"/>
    <property type="evidence" value="ECO:0007669"/>
    <property type="project" value="UniProtKB-SubCell"/>
</dbReference>
<dbReference type="GO" id="GO:0004623">
    <property type="term" value="F:phospholipase A2 activity"/>
    <property type="evidence" value="ECO:0007669"/>
    <property type="project" value="UniProtKB-EC"/>
</dbReference>
<dbReference type="GO" id="GO:0090729">
    <property type="term" value="F:toxin activity"/>
    <property type="evidence" value="ECO:0007669"/>
    <property type="project" value="UniProtKB-KW"/>
</dbReference>
<dbReference type="GO" id="GO:0050482">
    <property type="term" value="P:arachidonate secretion"/>
    <property type="evidence" value="ECO:0007669"/>
    <property type="project" value="InterPro"/>
</dbReference>
<dbReference type="GO" id="GO:0006644">
    <property type="term" value="P:phospholipid metabolic process"/>
    <property type="evidence" value="ECO:0007669"/>
    <property type="project" value="InterPro"/>
</dbReference>
<dbReference type="Gene3D" id="1.20.90.10">
    <property type="entry name" value="Phospholipase A2 domain"/>
    <property type="match status" value="1"/>
</dbReference>
<dbReference type="InterPro" id="IPR038875">
    <property type="entry name" value="PLA2_conodipine-like"/>
</dbReference>
<dbReference type="InterPro" id="IPR036444">
    <property type="entry name" value="PLipase_A2_dom_sf"/>
</dbReference>
<dbReference type="PANTHER" id="PTHR37687">
    <property type="entry name" value="AGAP006772-PA"/>
    <property type="match status" value="1"/>
</dbReference>
<dbReference type="PANTHER" id="PTHR37687:SF1">
    <property type="entry name" value="AGAP006772-PA"/>
    <property type="match status" value="1"/>
</dbReference>
<dbReference type="SUPFAM" id="SSF48619">
    <property type="entry name" value="Phospholipase A2, PLA2"/>
    <property type="match status" value="1"/>
</dbReference>
<proteinExistence type="evidence at protein level"/>
<reference evidence="6" key="1">
    <citation type="journal article" date="2019" name="Mol. Cell. Proteomics">
        <title>Conodipine-P1-3, the First Phospholipases A2 Characterized from Injected Cone Snail Venom.</title>
        <authorList>
            <person name="Moeller C."/>
            <person name="Davis W.C."/>
            <person name="Clark E."/>
            <person name="DeCaprio A."/>
            <person name="Mari F."/>
        </authorList>
    </citation>
    <scope>NUCLEOTIDE SEQUENCE [MRNA]</scope>
    <scope>PROTEIN SEQUENCE OF 25-96; 131-157 AND 167-178</scope>
    <scope>MASS SPECTROMETRY</scope>
    <scope>FUNCTION</scope>
    <scope>CATALYTIC ACTIVITY</scope>
    <scope>COFACTOR</scope>
    <scope>SUBUNIT</scope>
    <scope>SUBCELLULAR LOCATION</scope>
    <scope>TISSUE SPECIFICITY</scope>
    <scope>HYDROXYLATION AT PRO-38; PRO-42; PRO-49 AND PRO-137</scope>
    <scope>PYROGLUTAMATE FORMATION AT GLN-131</scope>
</reference>
<evidence type="ECO:0000250" key="1">
    <source>
        <dbReference type="UniProtKB" id="P00608"/>
    </source>
</evidence>
<evidence type="ECO:0000269" key="2">
    <source>
    </source>
</evidence>
<evidence type="ECO:0000303" key="3">
    <source>
    </source>
</evidence>
<evidence type="ECO:0000305" key="4"/>
<evidence type="ECO:0000305" key="5">
    <source>
    </source>
</evidence>
<evidence type="ECO:0000312" key="6">
    <source>
        <dbReference type="EMBL" id="QEO32922.1"/>
    </source>
</evidence>
<organism evidence="6">
    <name type="scientific">Conus purpurascens</name>
    <name type="common">Purple cone</name>
    <dbReference type="NCBI Taxonomy" id="41690"/>
    <lineage>
        <taxon>Eukaryota</taxon>
        <taxon>Metazoa</taxon>
        <taxon>Spiralia</taxon>
        <taxon>Lophotrochozoa</taxon>
        <taxon>Mollusca</taxon>
        <taxon>Gastropoda</taxon>
        <taxon>Caenogastropoda</taxon>
        <taxon>Neogastropoda</taxon>
        <taxon>Conoidea</taxon>
        <taxon>Conidae</taxon>
        <taxon>Conus</taxon>
        <taxon>Chelyconus</taxon>
    </lineage>
</organism>
<accession>A0A5C2A2T2</accession>
<keyword id="KW-0106">Calcium</keyword>
<keyword id="KW-0903">Direct protein sequencing</keyword>
<keyword id="KW-1015">Disulfide bond</keyword>
<keyword id="KW-0378">Hydrolase</keyword>
<keyword id="KW-0379">Hydroxylation</keyword>
<keyword id="KW-0873">Pyrrolidone carboxylic acid</keyword>
<keyword id="KW-0964">Secreted</keyword>
<keyword id="KW-0732">Signal</keyword>
<keyword id="KW-0800">Toxin</keyword>
<protein>
    <recommendedName>
        <fullName evidence="3">Conodipine-P1</fullName>
        <shortName evidence="3">Cdpi-P1</shortName>
        <ecNumber evidence="2">3.1.1.4</ecNumber>
    </recommendedName>
    <alternativeName>
        <fullName evidence="4">Phosphatidylcholine 2-acylhydrolase</fullName>
    </alternativeName>
    <alternativeName>
        <fullName evidence="4">Phospholipase A2</fullName>
        <shortName evidence="4">PLA2</shortName>
    </alternativeName>
    <component>
        <recommendedName>
            <fullName evidence="3">Conodipine-P1 alpha subunit</fullName>
        </recommendedName>
    </component>
    <component>
        <recommendedName>
            <fullName evidence="3">Conodipine-P1 beta subunit</fullName>
        </recommendedName>
    </component>
</protein>